<protein>
    <recommendedName>
        <fullName>Glucose-1-phosphate thymidylyltransferase</fullName>
        <ecNumber evidence="1">2.7.7.24</ecNumber>
    </recommendedName>
    <alternativeName>
        <fullName>dTDP-glucose pyrophosphorylase</fullName>
    </alternativeName>
    <alternativeName>
        <fullName>dTDP-glucose synthase</fullName>
    </alternativeName>
</protein>
<accession>Q9ZAE7</accession>
<accession>G8SLW3</accession>
<gene>
    <name type="primary">acbA</name>
    <name type="ordered locus">ACPL_3682</name>
</gene>
<feature type="chain" id="PRO_0000208006" description="Glucose-1-phosphate thymidylyltransferase">
    <location>
        <begin position="1"/>
        <end position="303"/>
    </location>
</feature>
<feature type="binding site" evidence="1">
    <location>
        <position position="108"/>
    </location>
    <ligand>
        <name>Mg(2+)</name>
        <dbReference type="ChEBI" id="CHEBI:18420"/>
    </ligand>
</feature>
<feature type="binding site" evidence="1">
    <location>
        <position position="222"/>
    </location>
    <ligand>
        <name>Mg(2+)</name>
        <dbReference type="ChEBI" id="CHEBI:18420"/>
    </ligand>
</feature>
<comment type="function">
    <text evidence="1">Catalyzes the formation of dTDP-glucose, from dTTP and glucose 1-phosphate, as well as its pyrophosphorolysis.</text>
</comment>
<comment type="function">
    <text>Probably involved in the biosynthesis of the acarviose moiety of the alpha-glucosidase inhibitor acarbose.</text>
</comment>
<comment type="catalytic activity">
    <reaction evidence="1">
        <text>dTTP + alpha-D-glucose 1-phosphate + H(+) = dTDP-alpha-D-glucose + diphosphate</text>
        <dbReference type="Rhea" id="RHEA:15225"/>
        <dbReference type="ChEBI" id="CHEBI:15378"/>
        <dbReference type="ChEBI" id="CHEBI:33019"/>
        <dbReference type="ChEBI" id="CHEBI:37568"/>
        <dbReference type="ChEBI" id="CHEBI:57477"/>
        <dbReference type="ChEBI" id="CHEBI:58601"/>
        <dbReference type="EC" id="2.7.7.24"/>
    </reaction>
</comment>
<comment type="cofactor">
    <cofactor evidence="1">
        <name>Mg(2+)</name>
        <dbReference type="ChEBI" id="CHEBI:18420"/>
    </cofactor>
    <text evidence="1">Binds 1 Mg(2+) ion per subunit.</text>
</comment>
<comment type="similarity">
    <text evidence="2">Belongs to the glucose-1-phosphate thymidylyltransferase family.</text>
</comment>
<comment type="sequence caution" evidence="2">
    <conflict type="erroneous initiation">
        <sequence resource="EMBL-CDS" id="AEV84577"/>
    </conflict>
    <text>Truncated N-terminus.</text>
</comment>
<keyword id="KW-0460">Magnesium</keyword>
<keyword id="KW-0479">Metal-binding</keyword>
<keyword id="KW-0548">Nucleotidyltransferase</keyword>
<keyword id="KW-1185">Reference proteome</keyword>
<keyword id="KW-0808">Transferase</keyword>
<dbReference type="EC" id="2.7.7.24" evidence="1"/>
<dbReference type="EMBL" id="Y18523">
    <property type="protein sequence ID" value="CAA77210.2"/>
    <property type="molecule type" value="Genomic_DNA"/>
</dbReference>
<dbReference type="EMBL" id="CP003170">
    <property type="protein sequence ID" value="AEV84577.1"/>
    <property type="status" value="ALT_INIT"/>
    <property type="molecule type" value="Genomic_DNA"/>
</dbReference>
<dbReference type="RefSeq" id="WP_043514542.1">
    <property type="nucleotide sequence ID" value="NC_017803.1"/>
</dbReference>
<dbReference type="SMR" id="Q9ZAE7"/>
<dbReference type="STRING" id="134676.ACPL_3682"/>
<dbReference type="KEGG" id="ase:ACPL_3682"/>
<dbReference type="PATRIC" id="fig|134676.3.peg.3598"/>
<dbReference type="eggNOG" id="COG1209">
    <property type="taxonomic scope" value="Bacteria"/>
</dbReference>
<dbReference type="HOGENOM" id="CLU_029499_9_0_11"/>
<dbReference type="OrthoDB" id="9803871at2"/>
<dbReference type="Proteomes" id="UP000005440">
    <property type="component" value="Chromosome"/>
</dbReference>
<dbReference type="GO" id="GO:0008879">
    <property type="term" value="F:glucose-1-phosphate thymidylyltransferase activity"/>
    <property type="evidence" value="ECO:0007669"/>
    <property type="project" value="UniProtKB-EC"/>
</dbReference>
<dbReference type="GO" id="GO:0046872">
    <property type="term" value="F:metal ion binding"/>
    <property type="evidence" value="ECO:0007669"/>
    <property type="project" value="UniProtKB-KW"/>
</dbReference>
<dbReference type="GO" id="GO:0009058">
    <property type="term" value="P:biosynthetic process"/>
    <property type="evidence" value="ECO:0007669"/>
    <property type="project" value="InterPro"/>
</dbReference>
<dbReference type="CDD" id="cd02538">
    <property type="entry name" value="G1P_TT_short"/>
    <property type="match status" value="1"/>
</dbReference>
<dbReference type="FunFam" id="3.90.550.10:FF:000023">
    <property type="entry name" value="Glucose-1-phosphate thymidylyltransferase"/>
    <property type="match status" value="1"/>
</dbReference>
<dbReference type="Gene3D" id="3.90.550.10">
    <property type="entry name" value="Spore Coat Polysaccharide Biosynthesis Protein SpsA, Chain A"/>
    <property type="match status" value="1"/>
</dbReference>
<dbReference type="InterPro" id="IPR005907">
    <property type="entry name" value="G1P_thy_trans_s"/>
</dbReference>
<dbReference type="InterPro" id="IPR005835">
    <property type="entry name" value="NTP_transferase_dom"/>
</dbReference>
<dbReference type="InterPro" id="IPR029044">
    <property type="entry name" value="Nucleotide-diphossugar_trans"/>
</dbReference>
<dbReference type="NCBIfam" id="TIGR01207">
    <property type="entry name" value="rmlA"/>
    <property type="match status" value="1"/>
</dbReference>
<dbReference type="PANTHER" id="PTHR43532">
    <property type="entry name" value="GLUCOSE-1-PHOSPHATE THYMIDYLYLTRANSFERASE"/>
    <property type="match status" value="1"/>
</dbReference>
<dbReference type="PANTHER" id="PTHR43532:SF1">
    <property type="entry name" value="GLUCOSE-1-PHOSPHATE THYMIDYLYLTRANSFERASE 1"/>
    <property type="match status" value="1"/>
</dbReference>
<dbReference type="Pfam" id="PF00483">
    <property type="entry name" value="NTP_transferase"/>
    <property type="match status" value="1"/>
</dbReference>
<dbReference type="SUPFAM" id="SSF53448">
    <property type="entry name" value="Nucleotide-diphospho-sugar transferases"/>
    <property type="match status" value="1"/>
</dbReference>
<organism>
    <name type="scientific">Actinoplanes sp. (strain ATCC 31044 / CBS 674.73 / SE50/110)</name>
    <dbReference type="NCBI Taxonomy" id="134676"/>
    <lineage>
        <taxon>Bacteria</taxon>
        <taxon>Bacillati</taxon>
        <taxon>Actinomycetota</taxon>
        <taxon>Actinomycetes</taxon>
        <taxon>Micromonosporales</taxon>
        <taxon>Micromonosporaceae</taxon>
        <taxon>Actinoplanes</taxon>
    </lineage>
</organism>
<proteinExistence type="inferred from homology"/>
<sequence>MRGILLAGGTGSRLRPVTWAVSKQLMPVYDKPMIYYPLATLVSCGIREILVITTETEAAQFQRLLGDGSQWGLRLEFAVQQRPGGIAEAFLIGEEFLAGGPVALMLGDNLLHGVDFRPCVQRARETAGGHVFGVAVADPSAYGVVEFDAAGRVLSIEEKPVRPRSPYAVPGFYLYDADVVETARSLRPSARGELEITEVNQAYLRRGALSVTLLGRGAVWLDTGTLADCMRAVDYVRAIDEGQGIKIGCVEEAAWRAGFLDTAQLRALAEPLMSSGYGQYLLALTGDGLSRTPQWPALTAAAG</sequence>
<evidence type="ECO:0000250" key="1">
    <source>
        <dbReference type="UniProtKB" id="P61887"/>
    </source>
</evidence>
<evidence type="ECO:0000305" key="2"/>
<name>RMLA_ACTS5</name>
<reference key="1">
    <citation type="journal article" date="1999" name="J. Biol. Chem.">
        <title>The AcbC protein from Actinoplanes species is a C7-cyclitol synthase related to 3-dehydroquinate synthases and is involved in the biosynthesis of the alpha-glucosidase inhibitor acarbose.</title>
        <authorList>
            <person name="Stratmann A."/>
            <person name="Mahmud T."/>
            <person name="Lee S."/>
            <person name="Distler J."/>
            <person name="Floss H.G."/>
            <person name="Piepersberg W."/>
        </authorList>
    </citation>
    <scope>NUCLEOTIDE SEQUENCE [GENOMIC DNA]</scope>
    <source>
        <strain>ATCC 31044 / CBS 674.73 / SE50/110</strain>
    </source>
</reference>
<reference key="2">
    <citation type="submission" date="2006-01" db="EMBL/GenBank/DDBJ databases">
        <authorList>
            <person name="Wehmeier U.F."/>
        </authorList>
    </citation>
    <scope>SEQUENCE REVISION TO 264-265</scope>
</reference>
<reference key="3">
    <citation type="submission" date="2011-12" db="EMBL/GenBank/DDBJ databases">
        <title>The complete genome sequence of the acarbose producer Actinoplanes sp. SE50/110.</title>
        <authorList>
            <person name="Schwientek P."/>
            <person name="Szczepanowski R."/>
            <person name="Kalinowski J."/>
            <person name="Klein A."/>
            <person name="Selber K."/>
            <person name="Wehmeier U.F."/>
            <person name="Stoye J."/>
            <person name="Puehler A."/>
        </authorList>
    </citation>
    <scope>NUCLEOTIDE SEQUENCE [LARGE SCALE GENOMIC DNA]</scope>
    <source>
        <strain>ATCC 31044 / CBS 674.73 / SE50/110</strain>
    </source>
</reference>